<name>ACCA_PROM2</name>
<gene>
    <name evidence="1" type="primary">accA</name>
    <name type="ordered locus">P9215_06151</name>
</gene>
<keyword id="KW-0067">ATP-binding</keyword>
<keyword id="KW-0963">Cytoplasm</keyword>
<keyword id="KW-0275">Fatty acid biosynthesis</keyword>
<keyword id="KW-0276">Fatty acid metabolism</keyword>
<keyword id="KW-0444">Lipid biosynthesis</keyword>
<keyword id="KW-0443">Lipid metabolism</keyword>
<keyword id="KW-0547">Nucleotide-binding</keyword>
<keyword id="KW-0808">Transferase</keyword>
<sequence length="335" mass="37096">MAKRYLLDFEKPLVELEKQIEQIKELARDSEVDVSQQLLQLETLAARRREEIFKSLTPAQKIQVARHPQRPSTLDFVQMFCDDWIELHGDRNGGDDMALVGGIGSINNRPVLILGHQKGRDTKENVVRNFGMAKPGGYRKALRLMQHADRFSLPILTFIDTPGAYAGLTAEEQGQGEAIARNLREMFGLKVPIVATVIGEGGSGGALGIGVADRLLMFEHSVYTVASPEACASILWRDAAKAPEAASALKITGKDLLKLGIIDEVLPEPSGGNNWAPLDAGNTLKEAIEKHLNALLQMTKDELIEERYKKFRVLGKFIEANNIEEIYSEIPQKTE</sequence>
<evidence type="ECO:0000255" key="1">
    <source>
        <dbReference type="HAMAP-Rule" id="MF_00823"/>
    </source>
</evidence>
<evidence type="ECO:0000255" key="2">
    <source>
        <dbReference type="PROSITE-ProRule" id="PRU01137"/>
    </source>
</evidence>
<feature type="chain" id="PRO_1000062649" description="Acetyl-coenzyme A carboxylase carboxyl transferase subunit alpha">
    <location>
        <begin position="1"/>
        <end position="335"/>
    </location>
</feature>
<feature type="domain" description="CoA carboxyltransferase C-terminal" evidence="2">
    <location>
        <begin position="40"/>
        <end position="294"/>
    </location>
</feature>
<reference key="1">
    <citation type="journal article" date="2007" name="PLoS Genet.">
        <title>Patterns and implications of gene gain and loss in the evolution of Prochlorococcus.</title>
        <authorList>
            <person name="Kettler G.C."/>
            <person name="Martiny A.C."/>
            <person name="Huang K."/>
            <person name="Zucker J."/>
            <person name="Coleman M.L."/>
            <person name="Rodrigue S."/>
            <person name="Chen F."/>
            <person name="Lapidus A."/>
            <person name="Ferriera S."/>
            <person name="Johnson J."/>
            <person name="Steglich C."/>
            <person name="Church G.M."/>
            <person name="Richardson P."/>
            <person name="Chisholm S.W."/>
        </authorList>
    </citation>
    <scope>NUCLEOTIDE SEQUENCE [LARGE SCALE GENOMIC DNA]</scope>
    <source>
        <strain>MIT 9215</strain>
    </source>
</reference>
<comment type="function">
    <text evidence="1">Component of the acetyl coenzyme A carboxylase (ACC) complex. First, biotin carboxylase catalyzes the carboxylation of biotin on its carrier protein (BCCP) and then the CO(2) group is transferred by the carboxyltransferase to acetyl-CoA to form malonyl-CoA.</text>
</comment>
<comment type="catalytic activity">
    <reaction evidence="1">
        <text>N(6)-carboxybiotinyl-L-lysyl-[protein] + acetyl-CoA = N(6)-biotinyl-L-lysyl-[protein] + malonyl-CoA</text>
        <dbReference type="Rhea" id="RHEA:54728"/>
        <dbReference type="Rhea" id="RHEA-COMP:10505"/>
        <dbReference type="Rhea" id="RHEA-COMP:10506"/>
        <dbReference type="ChEBI" id="CHEBI:57288"/>
        <dbReference type="ChEBI" id="CHEBI:57384"/>
        <dbReference type="ChEBI" id="CHEBI:83144"/>
        <dbReference type="ChEBI" id="CHEBI:83145"/>
        <dbReference type="EC" id="2.1.3.15"/>
    </reaction>
</comment>
<comment type="pathway">
    <text evidence="1">Lipid metabolism; malonyl-CoA biosynthesis; malonyl-CoA from acetyl-CoA: step 1/1.</text>
</comment>
<comment type="subunit">
    <text evidence="1">Acetyl-CoA carboxylase is a heterohexamer composed of biotin carboxyl carrier protein (AccB), biotin carboxylase (AccC) and two subunits each of ACCase subunit alpha (AccA) and ACCase subunit beta (AccD).</text>
</comment>
<comment type="subcellular location">
    <subcellularLocation>
        <location evidence="1">Cytoplasm</location>
    </subcellularLocation>
</comment>
<comment type="similarity">
    <text evidence="1">Belongs to the AccA family.</text>
</comment>
<organism>
    <name type="scientific">Prochlorococcus marinus (strain MIT 9215)</name>
    <dbReference type="NCBI Taxonomy" id="93060"/>
    <lineage>
        <taxon>Bacteria</taxon>
        <taxon>Bacillati</taxon>
        <taxon>Cyanobacteriota</taxon>
        <taxon>Cyanophyceae</taxon>
        <taxon>Synechococcales</taxon>
        <taxon>Prochlorococcaceae</taxon>
        <taxon>Prochlorococcus</taxon>
    </lineage>
</organism>
<protein>
    <recommendedName>
        <fullName evidence="1">Acetyl-coenzyme A carboxylase carboxyl transferase subunit alpha</fullName>
        <shortName evidence="1">ACCase subunit alpha</shortName>
        <shortName evidence="1">Acetyl-CoA carboxylase carboxyltransferase subunit alpha</shortName>
        <ecNumber evidence="1">2.1.3.15</ecNumber>
    </recommendedName>
</protein>
<accession>A8G3P9</accession>
<proteinExistence type="inferred from homology"/>
<dbReference type="EC" id="2.1.3.15" evidence="1"/>
<dbReference type="EMBL" id="CP000825">
    <property type="protein sequence ID" value="ABV50230.1"/>
    <property type="molecule type" value="Genomic_DNA"/>
</dbReference>
<dbReference type="RefSeq" id="WP_012007356.1">
    <property type="nucleotide sequence ID" value="NC_009840.1"/>
</dbReference>
<dbReference type="SMR" id="A8G3P9"/>
<dbReference type="STRING" id="93060.P9215_06151"/>
<dbReference type="KEGG" id="pmh:P9215_06151"/>
<dbReference type="eggNOG" id="COG0825">
    <property type="taxonomic scope" value="Bacteria"/>
</dbReference>
<dbReference type="HOGENOM" id="CLU_015486_0_2_3"/>
<dbReference type="OrthoDB" id="9808023at2"/>
<dbReference type="UniPathway" id="UPA00655">
    <property type="reaction ID" value="UER00711"/>
</dbReference>
<dbReference type="Proteomes" id="UP000002014">
    <property type="component" value="Chromosome"/>
</dbReference>
<dbReference type="GO" id="GO:0009317">
    <property type="term" value="C:acetyl-CoA carboxylase complex"/>
    <property type="evidence" value="ECO:0007669"/>
    <property type="project" value="InterPro"/>
</dbReference>
<dbReference type="GO" id="GO:0003989">
    <property type="term" value="F:acetyl-CoA carboxylase activity"/>
    <property type="evidence" value="ECO:0007669"/>
    <property type="project" value="InterPro"/>
</dbReference>
<dbReference type="GO" id="GO:0005524">
    <property type="term" value="F:ATP binding"/>
    <property type="evidence" value="ECO:0007669"/>
    <property type="project" value="UniProtKB-KW"/>
</dbReference>
<dbReference type="GO" id="GO:0016743">
    <property type="term" value="F:carboxyl- or carbamoyltransferase activity"/>
    <property type="evidence" value="ECO:0007669"/>
    <property type="project" value="UniProtKB-UniRule"/>
</dbReference>
<dbReference type="GO" id="GO:0006633">
    <property type="term" value="P:fatty acid biosynthetic process"/>
    <property type="evidence" value="ECO:0007669"/>
    <property type="project" value="UniProtKB-KW"/>
</dbReference>
<dbReference type="GO" id="GO:2001295">
    <property type="term" value="P:malonyl-CoA biosynthetic process"/>
    <property type="evidence" value="ECO:0007669"/>
    <property type="project" value="UniProtKB-UniRule"/>
</dbReference>
<dbReference type="Gene3D" id="3.90.226.10">
    <property type="entry name" value="2-enoyl-CoA Hydratase, Chain A, domain 1"/>
    <property type="match status" value="1"/>
</dbReference>
<dbReference type="HAMAP" id="MF_00823">
    <property type="entry name" value="AcetylCoA_CT_alpha"/>
    <property type="match status" value="1"/>
</dbReference>
<dbReference type="InterPro" id="IPR001095">
    <property type="entry name" value="Acetyl_CoA_COase_a_su"/>
</dbReference>
<dbReference type="InterPro" id="IPR029045">
    <property type="entry name" value="ClpP/crotonase-like_dom_sf"/>
</dbReference>
<dbReference type="InterPro" id="IPR011763">
    <property type="entry name" value="COA_CT_C"/>
</dbReference>
<dbReference type="NCBIfam" id="TIGR00513">
    <property type="entry name" value="accA"/>
    <property type="match status" value="1"/>
</dbReference>
<dbReference type="NCBIfam" id="NF041504">
    <property type="entry name" value="AccA_sub"/>
    <property type="match status" value="1"/>
</dbReference>
<dbReference type="NCBIfam" id="NF004344">
    <property type="entry name" value="PRK05724.1"/>
    <property type="match status" value="1"/>
</dbReference>
<dbReference type="PANTHER" id="PTHR42853">
    <property type="entry name" value="ACETYL-COENZYME A CARBOXYLASE CARBOXYL TRANSFERASE SUBUNIT ALPHA"/>
    <property type="match status" value="1"/>
</dbReference>
<dbReference type="PANTHER" id="PTHR42853:SF3">
    <property type="entry name" value="ACETYL-COENZYME A CARBOXYLASE CARBOXYL TRANSFERASE SUBUNIT ALPHA, CHLOROPLASTIC"/>
    <property type="match status" value="1"/>
</dbReference>
<dbReference type="Pfam" id="PF03255">
    <property type="entry name" value="ACCA"/>
    <property type="match status" value="1"/>
</dbReference>
<dbReference type="PRINTS" id="PR01069">
    <property type="entry name" value="ACCCTRFRASEA"/>
</dbReference>
<dbReference type="SUPFAM" id="SSF52096">
    <property type="entry name" value="ClpP/crotonase"/>
    <property type="match status" value="1"/>
</dbReference>
<dbReference type="PROSITE" id="PS50989">
    <property type="entry name" value="COA_CT_CTER"/>
    <property type="match status" value="1"/>
</dbReference>